<organism>
    <name type="scientific">Mycobacterium tuberculosis (strain ATCC 25618 / H37Rv)</name>
    <dbReference type="NCBI Taxonomy" id="83332"/>
    <lineage>
        <taxon>Bacteria</taxon>
        <taxon>Bacillati</taxon>
        <taxon>Actinomycetota</taxon>
        <taxon>Actinomycetes</taxon>
        <taxon>Mycobacteriales</taxon>
        <taxon>Mycobacteriaceae</taxon>
        <taxon>Mycobacterium</taxon>
        <taxon>Mycobacterium tuberculosis complex</taxon>
    </lineage>
</organism>
<accession>P9WMD9</accession>
<accession>L0T3U8</accession>
<accession>O53757</accession>
<accession>Q7D9R3</accession>
<evidence type="ECO:0000255" key="1">
    <source>
        <dbReference type="PROSITE-ProRule" id="PRU00335"/>
    </source>
</evidence>
<protein>
    <recommendedName>
        <fullName>Uncharacterized HTH-type transcriptional regulator Rv0472c</fullName>
    </recommendedName>
</protein>
<feature type="chain" id="PRO_0000382633" description="Uncharacterized HTH-type transcriptional regulator Rv0472c">
    <location>
        <begin position="1"/>
        <end position="234"/>
    </location>
</feature>
<feature type="domain" description="HTH tetR-type" evidence="1">
    <location>
        <begin position="24"/>
        <end position="83"/>
    </location>
</feature>
<feature type="DNA-binding region" description="H-T-H motif" evidence="1">
    <location>
        <begin position="46"/>
        <end position="65"/>
    </location>
</feature>
<comment type="miscellaneous">
    <text>Was identified as a high-confidence drug target.</text>
</comment>
<keyword id="KW-0238">DNA-binding</keyword>
<keyword id="KW-1185">Reference proteome</keyword>
<keyword id="KW-0804">Transcription</keyword>
<keyword id="KW-0805">Transcription regulation</keyword>
<sequence length="234" mass="26418">MAERIPAVTVKTDGRKRRWHQHKVERRNELVDGTIEAIRRHGRFLSMDEIAAEIGVSKTVLYRYFVDKNDLTTAVMMRFTQTTLIPNMIAALSADMDGFELTREIIRVYVETVAAQPEPYRFVMANSSASKSKVIADSERIIARMLAVMLRRRMQEAGMDTGGVEPWAYLIVGGVQLATHSWMSDPRMSSDELIDYLTMLSWSALCGIVEAGGSLEKFREQPHPSPIVPAWGQV</sequence>
<gene>
    <name type="ordered locus">Rv0472c</name>
</gene>
<reference key="1">
    <citation type="journal article" date="1998" name="Nature">
        <title>Deciphering the biology of Mycobacterium tuberculosis from the complete genome sequence.</title>
        <authorList>
            <person name="Cole S.T."/>
            <person name="Brosch R."/>
            <person name="Parkhill J."/>
            <person name="Garnier T."/>
            <person name="Churcher C.M."/>
            <person name="Harris D.E."/>
            <person name="Gordon S.V."/>
            <person name="Eiglmeier K."/>
            <person name="Gas S."/>
            <person name="Barry C.E. III"/>
            <person name="Tekaia F."/>
            <person name="Badcock K."/>
            <person name="Basham D."/>
            <person name="Brown D."/>
            <person name="Chillingworth T."/>
            <person name="Connor R."/>
            <person name="Davies R.M."/>
            <person name="Devlin K."/>
            <person name="Feltwell T."/>
            <person name="Gentles S."/>
            <person name="Hamlin N."/>
            <person name="Holroyd S."/>
            <person name="Hornsby T."/>
            <person name="Jagels K."/>
            <person name="Krogh A."/>
            <person name="McLean J."/>
            <person name="Moule S."/>
            <person name="Murphy L.D."/>
            <person name="Oliver S."/>
            <person name="Osborne J."/>
            <person name="Quail M.A."/>
            <person name="Rajandream M.A."/>
            <person name="Rogers J."/>
            <person name="Rutter S."/>
            <person name="Seeger K."/>
            <person name="Skelton S."/>
            <person name="Squares S."/>
            <person name="Squares R."/>
            <person name="Sulston J.E."/>
            <person name="Taylor K."/>
            <person name="Whitehead S."/>
            <person name="Barrell B.G."/>
        </authorList>
    </citation>
    <scope>NUCLEOTIDE SEQUENCE [LARGE SCALE GENOMIC DNA]</scope>
    <source>
        <strain>ATCC 25618 / H37Rv</strain>
    </source>
</reference>
<reference key="2">
    <citation type="journal article" date="2008" name="BMC Syst. Biol.">
        <title>targetTB: a target identification pipeline for Mycobacterium tuberculosis through an interactome, reactome and genome-scale structural analysis.</title>
        <authorList>
            <person name="Raman K."/>
            <person name="Yeturu K."/>
            <person name="Chandra N."/>
        </authorList>
    </citation>
    <scope>IDENTIFICATION AS A DRUG TARGET [LARGE SCALE ANALYSIS]</scope>
</reference>
<reference key="3">
    <citation type="journal article" date="2011" name="Mol. Cell. Proteomics">
        <title>Proteogenomic analysis of Mycobacterium tuberculosis by high resolution mass spectrometry.</title>
        <authorList>
            <person name="Kelkar D.S."/>
            <person name="Kumar D."/>
            <person name="Kumar P."/>
            <person name="Balakrishnan L."/>
            <person name="Muthusamy B."/>
            <person name="Yadav A.K."/>
            <person name="Shrivastava P."/>
            <person name="Marimuthu A."/>
            <person name="Anand S."/>
            <person name="Sundaram H."/>
            <person name="Kingsbury R."/>
            <person name="Harsha H.C."/>
            <person name="Nair B."/>
            <person name="Prasad T.S."/>
            <person name="Chauhan D.S."/>
            <person name="Katoch K."/>
            <person name="Katoch V.M."/>
            <person name="Kumar P."/>
            <person name="Chaerkady R."/>
            <person name="Ramachandran S."/>
            <person name="Dash D."/>
            <person name="Pandey A."/>
        </authorList>
    </citation>
    <scope>IDENTIFICATION BY MASS SPECTROMETRY [LARGE SCALE ANALYSIS]</scope>
    <source>
        <strain>ATCC 25618 / H37Rv</strain>
    </source>
</reference>
<dbReference type="EMBL" id="AL123456">
    <property type="protein sequence ID" value="CCP43206.1"/>
    <property type="molecule type" value="Genomic_DNA"/>
</dbReference>
<dbReference type="PIR" id="D70829">
    <property type="entry name" value="D70829"/>
</dbReference>
<dbReference type="RefSeq" id="NP_214986.1">
    <property type="nucleotide sequence ID" value="NC_000962.3"/>
</dbReference>
<dbReference type="RefSeq" id="WP_003402330.1">
    <property type="nucleotide sequence ID" value="NZ_NVQJ01000002.1"/>
</dbReference>
<dbReference type="SMR" id="P9WMD9"/>
<dbReference type="STRING" id="83332.Rv0472c"/>
<dbReference type="PaxDb" id="83332-Rv0472c"/>
<dbReference type="DNASU" id="886308"/>
<dbReference type="GeneID" id="886308"/>
<dbReference type="KEGG" id="mtu:Rv0472c"/>
<dbReference type="KEGG" id="mtv:RVBD_0472c"/>
<dbReference type="TubercuList" id="Rv0472c"/>
<dbReference type="eggNOG" id="COG1309">
    <property type="taxonomic scope" value="Bacteria"/>
</dbReference>
<dbReference type="InParanoid" id="P9WMD9"/>
<dbReference type="OrthoDB" id="4542604at2"/>
<dbReference type="PhylomeDB" id="P9WMD9"/>
<dbReference type="Proteomes" id="UP000001584">
    <property type="component" value="Chromosome"/>
</dbReference>
<dbReference type="GO" id="GO:0005576">
    <property type="term" value="C:extracellular region"/>
    <property type="evidence" value="ECO:0007005"/>
    <property type="project" value="MTBBASE"/>
</dbReference>
<dbReference type="GO" id="GO:0003700">
    <property type="term" value="F:DNA-binding transcription factor activity"/>
    <property type="evidence" value="ECO:0000318"/>
    <property type="project" value="GO_Central"/>
</dbReference>
<dbReference type="GO" id="GO:0000976">
    <property type="term" value="F:transcription cis-regulatory region binding"/>
    <property type="evidence" value="ECO:0000318"/>
    <property type="project" value="GO_Central"/>
</dbReference>
<dbReference type="GO" id="GO:0006355">
    <property type="term" value="P:regulation of DNA-templated transcription"/>
    <property type="evidence" value="ECO:0000318"/>
    <property type="project" value="GO_Central"/>
</dbReference>
<dbReference type="FunFam" id="1.10.357.10:FF:000017">
    <property type="entry name" value="TetR family transcriptional regulator"/>
    <property type="match status" value="1"/>
</dbReference>
<dbReference type="Gene3D" id="1.10.357.10">
    <property type="entry name" value="Tetracycline Repressor, domain 2"/>
    <property type="match status" value="1"/>
</dbReference>
<dbReference type="InterPro" id="IPR009057">
    <property type="entry name" value="Homeodomain-like_sf"/>
</dbReference>
<dbReference type="InterPro" id="IPR050109">
    <property type="entry name" value="HTH-type_TetR-like_transc_reg"/>
</dbReference>
<dbReference type="InterPro" id="IPR001647">
    <property type="entry name" value="HTH_TetR"/>
</dbReference>
<dbReference type="InterPro" id="IPR036271">
    <property type="entry name" value="Tet_transcr_reg_TetR-rel_C_sf"/>
</dbReference>
<dbReference type="InterPro" id="IPR045823">
    <property type="entry name" value="TetR_C_32"/>
</dbReference>
<dbReference type="PANTHER" id="PTHR30055">
    <property type="entry name" value="HTH-TYPE TRANSCRIPTIONAL REGULATOR RUTR"/>
    <property type="match status" value="1"/>
</dbReference>
<dbReference type="PANTHER" id="PTHR30055:SF160">
    <property type="entry name" value="TRANSCRIPTIONAL REGULATORY PROTEIN (PROBABLY ASNC-FAMILY)-RELATED"/>
    <property type="match status" value="1"/>
</dbReference>
<dbReference type="Pfam" id="PF19344">
    <property type="entry name" value="TetR_C_32"/>
    <property type="match status" value="1"/>
</dbReference>
<dbReference type="Pfam" id="PF00440">
    <property type="entry name" value="TetR_N"/>
    <property type="match status" value="1"/>
</dbReference>
<dbReference type="SUPFAM" id="SSF46689">
    <property type="entry name" value="Homeodomain-like"/>
    <property type="match status" value="1"/>
</dbReference>
<dbReference type="SUPFAM" id="SSF48498">
    <property type="entry name" value="Tetracyclin repressor-like, C-terminal domain"/>
    <property type="match status" value="1"/>
</dbReference>
<dbReference type="PROSITE" id="PS50977">
    <property type="entry name" value="HTH_TETR_2"/>
    <property type="match status" value="1"/>
</dbReference>
<name>Y472_MYCTU</name>
<proteinExistence type="evidence at protein level"/>